<comment type="function">
    <text>Controls the rotational direction of flagella during chemotaxis.</text>
</comment>
<comment type="subcellular location">
    <subcellularLocation>
        <location evidence="2">Cell membrane</location>
        <topology evidence="2">Single-pass membrane protein</topology>
    </subcellularLocation>
</comment>
<comment type="similarity">
    <text evidence="2">Belongs to the FliL family.</text>
</comment>
<sequence>MKKKLMIILLIILIVIGALGAAAYFVLGGKSEKSEAKKSIDEIVASSVDVEEITTNLKSDNIIRLAIKLETDSDKSKEELEKRDFQVKDAVISLLADTNADQIEGDKGKETFKKELKDKINSYLQEGKVEKVYITSFNLQ</sequence>
<feature type="chain" id="PRO_0000180911" description="Flagellar protein FliL">
    <location>
        <begin position="1"/>
        <end position="140"/>
    </location>
</feature>
<feature type="transmembrane region" description="Helical" evidence="1">
    <location>
        <begin position="7"/>
        <end position="27"/>
    </location>
</feature>
<organism>
    <name type="scientific">Bacillus subtilis (strain 168)</name>
    <dbReference type="NCBI Taxonomy" id="224308"/>
    <lineage>
        <taxon>Bacteria</taxon>
        <taxon>Bacillati</taxon>
        <taxon>Bacillota</taxon>
        <taxon>Bacilli</taxon>
        <taxon>Bacillales</taxon>
        <taxon>Bacillaceae</taxon>
        <taxon>Bacillus</taxon>
    </lineage>
</organism>
<reference key="1">
    <citation type="journal article" date="1991" name="J. Bacteriol.">
        <title>The flaA locus of Bacillus subtilis is part of a large operon coding for flagellar structures, motility functions, and an ATPase-like polypeptide.</title>
        <authorList>
            <person name="Albertini A.M."/>
            <person name="Caramori T."/>
            <person name="Crabb W.D."/>
            <person name="Scoffone F."/>
            <person name="Galizzi A."/>
        </authorList>
    </citation>
    <scope>NUCLEOTIDE SEQUENCE [GENOMIC DNA]</scope>
    <source>
        <strain>168</strain>
    </source>
</reference>
<reference key="2">
    <citation type="journal article" date="1997" name="Nature">
        <title>The complete genome sequence of the Gram-positive bacterium Bacillus subtilis.</title>
        <authorList>
            <person name="Kunst F."/>
            <person name="Ogasawara N."/>
            <person name="Moszer I."/>
            <person name="Albertini A.M."/>
            <person name="Alloni G."/>
            <person name="Azevedo V."/>
            <person name="Bertero M.G."/>
            <person name="Bessieres P."/>
            <person name="Bolotin A."/>
            <person name="Borchert S."/>
            <person name="Borriss R."/>
            <person name="Boursier L."/>
            <person name="Brans A."/>
            <person name="Braun M."/>
            <person name="Brignell S.C."/>
            <person name="Bron S."/>
            <person name="Brouillet S."/>
            <person name="Bruschi C.V."/>
            <person name="Caldwell B."/>
            <person name="Capuano V."/>
            <person name="Carter N.M."/>
            <person name="Choi S.-K."/>
            <person name="Codani J.-J."/>
            <person name="Connerton I.F."/>
            <person name="Cummings N.J."/>
            <person name="Daniel R.A."/>
            <person name="Denizot F."/>
            <person name="Devine K.M."/>
            <person name="Duesterhoeft A."/>
            <person name="Ehrlich S.D."/>
            <person name="Emmerson P.T."/>
            <person name="Entian K.-D."/>
            <person name="Errington J."/>
            <person name="Fabret C."/>
            <person name="Ferrari E."/>
            <person name="Foulger D."/>
            <person name="Fritz C."/>
            <person name="Fujita M."/>
            <person name="Fujita Y."/>
            <person name="Fuma S."/>
            <person name="Galizzi A."/>
            <person name="Galleron N."/>
            <person name="Ghim S.-Y."/>
            <person name="Glaser P."/>
            <person name="Goffeau A."/>
            <person name="Golightly E.J."/>
            <person name="Grandi G."/>
            <person name="Guiseppi G."/>
            <person name="Guy B.J."/>
            <person name="Haga K."/>
            <person name="Haiech J."/>
            <person name="Harwood C.R."/>
            <person name="Henaut A."/>
            <person name="Hilbert H."/>
            <person name="Holsappel S."/>
            <person name="Hosono S."/>
            <person name="Hullo M.-F."/>
            <person name="Itaya M."/>
            <person name="Jones L.-M."/>
            <person name="Joris B."/>
            <person name="Karamata D."/>
            <person name="Kasahara Y."/>
            <person name="Klaerr-Blanchard M."/>
            <person name="Klein C."/>
            <person name="Kobayashi Y."/>
            <person name="Koetter P."/>
            <person name="Koningstein G."/>
            <person name="Krogh S."/>
            <person name="Kumano M."/>
            <person name="Kurita K."/>
            <person name="Lapidus A."/>
            <person name="Lardinois S."/>
            <person name="Lauber J."/>
            <person name="Lazarevic V."/>
            <person name="Lee S.-M."/>
            <person name="Levine A."/>
            <person name="Liu H."/>
            <person name="Masuda S."/>
            <person name="Mauel C."/>
            <person name="Medigue C."/>
            <person name="Medina N."/>
            <person name="Mellado R.P."/>
            <person name="Mizuno M."/>
            <person name="Moestl D."/>
            <person name="Nakai S."/>
            <person name="Noback M."/>
            <person name="Noone D."/>
            <person name="O'Reilly M."/>
            <person name="Ogawa K."/>
            <person name="Ogiwara A."/>
            <person name="Oudega B."/>
            <person name="Park S.-H."/>
            <person name="Parro V."/>
            <person name="Pohl T.M."/>
            <person name="Portetelle D."/>
            <person name="Porwollik S."/>
            <person name="Prescott A.M."/>
            <person name="Presecan E."/>
            <person name="Pujic P."/>
            <person name="Purnelle B."/>
            <person name="Rapoport G."/>
            <person name="Rey M."/>
            <person name="Reynolds S."/>
            <person name="Rieger M."/>
            <person name="Rivolta C."/>
            <person name="Rocha E."/>
            <person name="Roche B."/>
            <person name="Rose M."/>
            <person name="Sadaie Y."/>
            <person name="Sato T."/>
            <person name="Scanlan E."/>
            <person name="Schleich S."/>
            <person name="Schroeter R."/>
            <person name="Scoffone F."/>
            <person name="Sekiguchi J."/>
            <person name="Sekowska A."/>
            <person name="Seror S.J."/>
            <person name="Serror P."/>
            <person name="Shin B.-S."/>
            <person name="Soldo B."/>
            <person name="Sorokin A."/>
            <person name="Tacconi E."/>
            <person name="Takagi T."/>
            <person name="Takahashi H."/>
            <person name="Takemaru K."/>
            <person name="Takeuchi M."/>
            <person name="Tamakoshi A."/>
            <person name="Tanaka T."/>
            <person name="Terpstra P."/>
            <person name="Tognoni A."/>
            <person name="Tosato V."/>
            <person name="Uchiyama S."/>
            <person name="Vandenbol M."/>
            <person name="Vannier F."/>
            <person name="Vassarotti A."/>
            <person name="Viari A."/>
            <person name="Wambutt R."/>
            <person name="Wedler E."/>
            <person name="Wedler H."/>
            <person name="Weitzenegger T."/>
            <person name="Winters P."/>
            <person name="Wipat A."/>
            <person name="Yamamoto H."/>
            <person name="Yamane K."/>
            <person name="Yasumoto K."/>
            <person name="Yata K."/>
            <person name="Yoshida K."/>
            <person name="Yoshikawa H.-F."/>
            <person name="Zumstein E."/>
            <person name="Yoshikawa H."/>
            <person name="Danchin A."/>
        </authorList>
    </citation>
    <scope>NUCLEOTIDE SEQUENCE [LARGE SCALE GENOMIC DNA]</scope>
    <source>
        <strain>168</strain>
    </source>
</reference>
<reference key="3">
    <citation type="journal article" date="1991" name="J. Bacteriol.">
        <title>Nucleotide sequence and characterization of a Bacillus subtilis gene encoding a flagellar switch protein.</title>
        <authorList>
            <person name="Zuberi A.R."/>
            <person name="Bischoff D.S."/>
            <person name="Ordal G.W."/>
        </authorList>
    </citation>
    <scope>NUCLEOTIDE SEQUENCE [GENOMIC DNA] OF 57-140</scope>
</reference>
<evidence type="ECO:0000255" key="1"/>
<evidence type="ECO:0000305" key="2"/>
<keyword id="KW-1003">Cell membrane</keyword>
<keyword id="KW-0145">Chemotaxis</keyword>
<keyword id="KW-0283">Flagellar rotation</keyword>
<keyword id="KW-0472">Membrane</keyword>
<keyword id="KW-1185">Reference proteome</keyword>
<keyword id="KW-0812">Transmembrane</keyword>
<keyword id="KW-1133">Transmembrane helix</keyword>
<proteinExistence type="inferred from homology"/>
<name>FLIL_BACSU</name>
<gene>
    <name type="primary">fliL</name>
    <name type="ordered locus">BSU16300</name>
</gene>
<protein>
    <recommendedName>
        <fullName>Flagellar protein FliL</fullName>
    </recommendedName>
</protein>
<accession>P23452</accession>
<dbReference type="EMBL" id="X56049">
    <property type="protein sequence ID" value="CAA39529.1"/>
    <property type="molecule type" value="Genomic_DNA"/>
</dbReference>
<dbReference type="EMBL" id="AL009126">
    <property type="protein sequence ID" value="CAB13503.1"/>
    <property type="molecule type" value="Genomic_DNA"/>
</dbReference>
<dbReference type="EMBL" id="M37691">
    <property type="protein sequence ID" value="AAA22445.1"/>
    <property type="molecule type" value="Genomic_DNA"/>
</dbReference>
<dbReference type="PIR" id="A38845">
    <property type="entry name" value="A38845"/>
</dbReference>
<dbReference type="RefSeq" id="NP_389512.1">
    <property type="nucleotide sequence ID" value="NC_000964.3"/>
</dbReference>
<dbReference type="RefSeq" id="WP_003231964.1">
    <property type="nucleotide sequence ID" value="NZ_OZ025638.1"/>
</dbReference>
<dbReference type="SMR" id="P23452"/>
<dbReference type="FunCoup" id="P23452">
    <property type="interactions" value="73"/>
</dbReference>
<dbReference type="STRING" id="224308.BSU16300"/>
<dbReference type="jPOST" id="P23452"/>
<dbReference type="PaxDb" id="224308-BSU16300"/>
<dbReference type="EnsemblBacteria" id="CAB13503">
    <property type="protein sequence ID" value="CAB13503"/>
    <property type="gene ID" value="BSU_16300"/>
</dbReference>
<dbReference type="GeneID" id="937103"/>
<dbReference type="KEGG" id="bsu:BSU16300"/>
<dbReference type="PATRIC" id="fig|224308.179.peg.1771"/>
<dbReference type="eggNOG" id="COG1580">
    <property type="taxonomic scope" value="Bacteria"/>
</dbReference>
<dbReference type="InParanoid" id="P23452"/>
<dbReference type="OrthoDB" id="2381796at2"/>
<dbReference type="PhylomeDB" id="P23452"/>
<dbReference type="BioCyc" id="BSUB:BSU16300-MONOMER"/>
<dbReference type="Proteomes" id="UP000001570">
    <property type="component" value="Chromosome"/>
</dbReference>
<dbReference type="GO" id="GO:0009425">
    <property type="term" value="C:bacterial-type flagellum basal body"/>
    <property type="evidence" value="ECO:0007669"/>
    <property type="project" value="InterPro"/>
</dbReference>
<dbReference type="GO" id="GO:0005886">
    <property type="term" value="C:plasma membrane"/>
    <property type="evidence" value="ECO:0007669"/>
    <property type="project" value="UniProtKB-SubCell"/>
</dbReference>
<dbReference type="GO" id="GO:0071978">
    <property type="term" value="P:bacterial-type flagellum-dependent swarming motility"/>
    <property type="evidence" value="ECO:0000318"/>
    <property type="project" value="GO_Central"/>
</dbReference>
<dbReference type="GO" id="GO:0006935">
    <property type="term" value="P:chemotaxis"/>
    <property type="evidence" value="ECO:0007669"/>
    <property type="project" value="UniProtKB-KW"/>
</dbReference>
<dbReference type="InterPro" id="IPR005503">
    <property type="entry name" value="FliL"/>
</dbReference>
<dbReference type="NCBIfam" id="NF005826">
    <property type="entry name" value="PRK07718.1"/>
    <property type="match status" value="1"/>
</dbReference>
<dbReference type="PANTHER" id="PTHR35091">
    <property type="entry name" value="FLAGELLAR PROTEIN FLIL"/>
    <property type="match status" value="1"/>
</dbReference>
<dbReference type="PANTHER" id="PTHR35091:SF2">
    <property type="entry name" value="FLAGELLAR PROTEIN FLIL"/>
    <property type="match status" value="1"/>
</dbReference>
<dbReference type="Pfam" id="PF03748">
    <property type="entry name" value="FliL"/>
    <property type="match status" value="1"/>
</dbReference>